<proteinExistence type="inferred from homology"/>
<name>C525A_DICDI</name>
<accession>Q7KWN2</accession>
<accession>Q1ZXL9</accession>
<dbReference type="EC" id="1.14.-.-"/>
<dbReference type="EMBL" id="AAFI02000008">
    <property type="protein sequence ID" value="EAS66966.1"/>
    <property type="molecule type" value="Genomic_DNA"/>
</dbReference>
<dbReference type="RefSeq" id="XP_001134632.1">
    <property type="nucleotide sequence ID" value="XM_001134632.1"/>
</dbReference>
<dbReference type="SMR" id="Q7KWN2"/>
<dbReference type="STRING" id="44689.Q7KWN2"/>
<dbReference type="PaxDb" id="44689-DDB0233046"/>
<dbReference type="EnsemblProtists" id="EAS66966">
    <property type="protein sequence ID" value="EAS66966"/>
    <property type="gene ID" value="DDB_G0272652"/>
</dbReference>
<dbReference type="GeneID" id="8618676"/>
<dbReference type="KEGG" id="ddi:DDB_G0272652"/>
<dbReference type="dictyBase" id="DDB_G0272652">
    <property type="gene designation" value="cyp525A1"/>
</dbReference>
<dbReference type="VEuPathDB" id="AmoebaDB:DDB_G0272652"/>
<dbReference type="eggNOG" id="KOG0157">
    <property type="taxonomic scope" value="Eukaryota"/>
</dbReference>
<dbReference type="HOGENOM" id="CLU_454508_0_0_1"/>
<dbReference type="InParanoid" id="Q7KWN2"/>
<dbReference type="OMA" id="RTFLFWI"/>
<dbReference type="PhylomeDB" id="Q7KWN2"/>
<dbReference type="PRO" id="PR:Q7KWN2"/>
<dbReference type="Proteomes" id="UP000002195">
    <property type="component" value="Chromosome 2"/>
</dbReference>
<dbReference type="GO" id="GO:0016020">
    <property type="term" value="C:membrane"/>
    <property type="evidence" value="ECO:0007669"/>
    <property type="project" value="UniProtKB-SubCell"/>
</dbReference>
<dbReference type="GO" id="GO:0020037">
    <property type="term" value="F:heme binding"/>
    <property type="evidence" value="ECO:0007669"/>
    <property type="project" value="InterPro"/>
</dbReference>
<dbReference type="GO" id="GO:0005506">
    <property type="term" value="F:iron ion binding"/>
    <property type="evidence" value="ECO:0007669"/>
    <property type="project" value="InterPro"/>
</dbReference>
<dbReference type="GO" id="GO:0004497">
    <property type="term" value="F:monooxygenase activity"/>
    <property type="evidence" value="ECO:0007669"/>
    <property type="project" value="UniProtKB-KW"/>
</dbReference>
<dbReference type="GO" id="GO:0016705">
    <property type="term" value="F:oxidoreductase activity, acting on paired donors, with incorporation or reduction of molecular oxygen"/>
    <property type="evidence" value="ECO:0007669"/>
    <property type="project" value="InterPro"/>
</dbReference>
<dbReference type="Gene3D" id="1.10.630.10">
    <property type="entry name" value="Cytochrome P450"/>
    <property type="match status" value="1"/>
</dbReference>
<dbReference type="InterPro" id="IPR001128">
    <property type="entry name" value="Cyt_P450"/>
</dbReference>
<dbReference type="InterPro" id="IPR017972">
    <property type="entry name" value="Cyt_P450_CS"/>
</dbReference>
<dbReference type="InterPro" id="IPR002401">
    <property type="entry name" value="Cyt_P450_E_grp-I"/>
</dbReference>
<dbReference type="InterPro" id="IPR036396">
    <property type="entry name" value="Cyt_P450_sf"/>
</dbReference>
<dbReference type="InterPro" id="IPR050476">
    <property type="entry name" value="Insect_CytP450_Detox"/>
</dbReference>
<dbReference type="PANTHER" id="PTHR24292:SF54">
    <property type="entry name" value="CYP9F3-RELATED"/>
    <property type="match status" value="1"/>
</dbReference>
<dbReference type="PANTHER" id="PTHR24292">
    <property type="entry name" value="CYTOCHROME P450"/>
    <property type="match status" value="1"/>
</dbReference>
<dbReference type="Pfam" id="PF00067">
    <property type="entry name" value="p450"/>
    <property type="match status" value="1"/>
</dbReference>
<dbReference type="PRINTS" id="PR00463">
    <property type="entry name" value="EP450I"/>
</dbReference>
<dbReference type="PRINTS" id="PR00385">
    <property type="entry name" value="P450"/>
</dbReference>
<dbReference type="SUPFAM" id="SSF48264">
    <property type="entry name" value="Cytochrome P450"/>
    <property type="match status" value="1"/>
</dbReference>
<dbReference type="PROSITE" id="PS00086">
    <property type="entry name" value="CYTOCHROME_P450"/>
    <property type="match status" value="1"/>
</dbReference>
<evidence type="ECO:0000250" key="1"/>
<evidence type="ECO:0000255" key="2"/>
<evidence type="ECO:0000256" key="3">
    <source>
        <dbReference type="SAM" id="MobiDB-lite"/>
    </source>
</evidence>
<evidence type="ECO:0000305" key="4"/>
<sequence>MDTTKNNDEFDISYFLTCSIFGFILWILTEQILKYYNKTNKNNKYNLPKGPSFLKWFINYLFNFYDLKLSNNKEEDNNNNNNKSNNSLSQEELIEDTSENTVLKWFNQLNSDNYSVSFFGRPMIFTRDTTISKYILSSNNIDNYTKPPDSSGVLIRLAQNSILMSEGDQWRYHRSIINQPFSSKNVKLMIPTIITTINKLINHLNNNNNNNNNNNNNNNNNNNNNNNNNNNNNNNNNNNNNNNNNNNNNNNNNNNNNNTIIIDIHSYCTKLTFDIIGKLSIGYDFNSIESSDNDNDNNDDDDISKQFDFILNEMIRPIRRFSSYLPLYNDIKLFKFLNELESIIKGAINSRSLITDNNNNKTYKKNFLLDNLLDDNVKEKDIIGNINTFLLAGHETSANLLTFIFYLLSTHNNVQNDLYNHLIENQKKKINKDNKFTEEDEDYQSIEFLDWVIYETLRLFPPAPMIGRTSKNDDILKSGNNNNNNNNNISIPSETLILISVYAIHRDPKLWKDPNIFNPYRWKNIENINNRSDFIPFSSGGRVCVGQKFSIVEARIIISKLILNFELSFNNLKSKPFKIYQRATLTPKYPVFLNFKKRENK</sequence>
<comment type="cofactor">
    <cofactor evidence="1">
        <name>heme</name>
        <dbReference type="ChEBI" id="CHEBI:30413"/>
    </cofactor>
</comment>
<comment type="subcellular location">
    <subcellularLocation>
        <location evidence="4">Membrane</location>
        <topology evidence="4">Single-pass membrane protein</topology>
    </subcellularLocation>
</comment>
<comment type="similarity">
    <text evidence="4">Belongs to the cytochrome P450 family.</text>
</comment>
<feature type="chain" id="PRO_0000318842" description="Probable cytochrome P450 525A1">
    <location>
        <begin position="1"/>
        <end position="601"/>
    </location>
</feature>
<feature type="transmembrane region" description="Helical" evidence="2">
    <location>
        <begin position="12"/>
        <end position="32"/>
    </location>
</feature>
<feature type="region of interest" description="Disordered" evidence="3">
    <location>
        <begin position="205"/>
        <end position="253"/>
    </location>
</feature>
<feature type="binding site" description="axial binding residue" evidence="1">
    <location>
        <position position="544"/>
    </location>
    <ligand>
        <name>heme</name>
        <dbReference type="ChEBI" id="CHEBI:30413"/>
    </ligand>
    <ligandPart>
        <name>Fe</name>
        <dbReference type="ChEBI" id="CHEBI:18248"/>
    </ligandPart>
</feature>
<reference key="1">
    <citation type="journal article" date="2002" name="Nature">
        <title>Sequence and analysis of chromosome 2 of Dictyostelium discoideum.</title>
        <authorList>
            <person name="Gloeckner G."/>
            <person name="Eichinger L."/>
            <person name="Szafranski K."/>
            <person name="Pachebat J.A."/>
            <person name="Bankier A.T."/>
            <person name="Dear P.H."/>
            <person name="Lehmann R."/>
            <person name="Baumgart C."/>
            <person name="Parra G."/>
            <person name="Abril J.F."/>
            <person name="Guigo R."/>
            <person name="Kumpf K."/>
            <person name="Tunggal B."/>
            <person name="Cox E.C."/>
            <person name="Quail M.A."/>
            <person name="Platzer M."/>
            <person name="Rosenthal A."/>
            <person name="Noegel A.A."/>
        </authorList>
    </citation>
    <scope>NUCLEOTIDE SEQUENCE [LARGE SCALE GENOMIC DNA]</scope>
    <source>
        <strain>AX4</strain>
    </source>
</reference>
<reference key="2">
    <citation type="journal article" date="2005" name="Nature">
        <title>The genome of the social amoeba Dictyostelium discoideum.</title>
        <authorList>
            <person name="Eichinger L."/>
            <person name="Pachebat J.A."/>
            <person name="Gloeckner G."/>
            <person name="Rajandream M.A."/>
            <person name="Sucgang R."/>
            <person name="Berriman M."/>
            <person name="Song J."/>
            <person name="Olsen R."/>
            <person name="Szafranski K."/>
            <person name="Xu Q."/>
            <person name="Tunggal B."/>
            <person name="Kummerfeld S."/>
            <person name="Madera M."/>
            <person name="Konfortov B.A."/>
            <person name="Rivero F."/>
            <person name="Bankier A.T."/>
            <person name="Lehmann R."/>
            <person name="Hamlin N."/>
            <person name="Davies R."/>
            <person name="Gaudet P."/>
            <person name="Fey P."/>
            <person name="Pilcher K."/>
            <person name="Chen G."/>
            <person name="Saunders D."/>
            <person name="Sodergren E.J."/>
            <person name="Davis P."/>
            <person name="Kerhornou A."/>
            <person name="Nie X."/>
            <person name="Hall N."/>
            <person name="Anjard C."/>
            <person name="Hemphill L."/>
            <person name="Bason N."/>
            <person name="Farbrother P."/>
            <person name="Desany B."/>
            <person name="Just E."/>
            <person name="Morio T."/>
            <person name="Rost R."/>
            <person name="Churcher C.M."/>
            <person name="Cooper J."/>
            <person name="Haydock S."/>
            <person name="van Driessche N."/>
            <person name="Cronin A."/>
            <person name="Goodhead I."/>
            <person name="Muzny D.M."/>
            <person name="Mourier T."/>
            <person name="Pain A."/>
            <person name="Lu M."/>
            <person name="Harper D."/>
            <person name="Lindsay R."/>
            <person name="Hauser H."/>
            <person name="James K.D."/>
            <person name="Quiles M."/>
            <person name="Madan Babu M."/>
            <person name="Saito T."/>
            <person name="Buchrieser C."/>
            <person name="Wardroper A."/>
            <person name="Felder M."/>
            <person name="Thangavelu M."/>
            <person name="Johnson D."/>
            <person name="Knights A."/>
            <person name="Loulseged H."/>
            <person name="Mungall K.L."/>
            <person name="Oliver K."/>
            <person name="Price C."/>
            <person name="Quail M.A."/>
            <person name="Urushihara H."/>
            <person name="Hernandez J."/>
            <person name="Rabbinowitsch E."/>
            <person name="Steffen D."/>
            <person name="Sanders M."/>
            <person name="Ma J."/>
            <person name="Kohara Y."/>
            <person name="Sharp S."/>
            <person name="Simmonds M.N."/>
            <person name="Spiegler S."/>
            <person name="Tivey A."/>
            <person name="Sugano S."/>
            <person name="White B."/>
            <person name="Walker D."/>
            <person name="Woodward J.R."/>
            <person name="Winckler T."/>
            <person name="Tanaka Y."/>
            <person name="Shaulsky G."/>
            <person name="Schleicher M."/>
            <person name="Weinstock G.M."/>
            <person name="Rosenthal A."/>
            <person name="Cox E.C."/>
            <person name="Chisholm R.L."/>
            <person name="Gibbs R.A."/>
            <person name="Loomis W.F."/>
            <person name="Platzer M."/>
            <person name="Kay R.R."/>
            <person name="Williams J.G."/>
            <person name="Dear P.H."/>
            <person name="Noegel A.A."/>
            <person name="Barrell B.G."/>
            <person name="Kuspa A."/>
        </authorList>
    </citation>
    <scope>NUCLEOTIDE SEQUENCE [LARGE SCALE GENOMIC DNA]</scope>
    <source>
        <strain>AX4</strain>
    </source>
</reference>
<gene>
    <name type="primary">cyp525A1</name>
    <name type="ORF">DDB_G0272652</name>
</gene>
<keyword id="KW-0349">Heme</keyword>
<keyword id="KW-0408">Iron</keyword>
<keyword id="KW-0472">Membrane</keyword>
<keyword id="KW-0479">Metal-binding</keyword>
<keyword id="KW-0503">Monooxygenase</keyword>
<keyword id="KW-0560">Oxidoreductase</keyword>
<keyword id="KW-1185">Reference proteome</keyword>
<keyword id="KW-0812">Transmembrane</keyword>
<keyword id="KW-1133">Transmembrane helix</keyword>
<organism>
    <name type="scientific">Dictyostelium discoideum</name>
    <name type="common">Social amoeba</name>
    <dbReference type="NCBI Taxonomy" id="44689"/>
    <lineage>
        <taxon>Eukaryota</taxon>
        <taxon>Amoebozoa</taxon>
        <taxon>Evosea</taxon>
        <taxon>Eumycetozoa</taxon>
        <taxon>Dictyostelia</taxon>
        <taxon>Dictyosteliales</taxon>
        <taxon>Dictyosteliaceae</taxon>
        <taxon>Dictyostelium</taxon>
    </lineage>
</organism>
<protein>
    <recommendedName>
        <fullName>Probable cytochrome P450 525A1</fullName>
        <ecNumber>1.14.-.-</ecNumber>
    </recommendedName>
</protein>